<protein>
    <recommendedName>
        <fullName evidence="18">Olfactory receptor 4E2</fullName>
    </recommendedName>
    <alternativeName>
        <fullName evidence="13 14 15 16 17">Odorant receptor 244-3</fullName>
    </alternativeName>
    <alternativeName>
        <fullName evidence="12">Odorant receptor 83</fullName>
    </alternativeName>
    <alternativeName>
        <fullName evidence="18">Olfactory receptor 1509</fullName>
    </alternativeName>
</protein>
<name>OR4E2_MOUSE</name>
<feature type="chain" id="PRO_0000444894" description="Olfactory receptor 4E2">
    <location>
        <begin position="1"/>
        <end position="308"/>
    </location>
</feature>
<feature type="topological domain" description="Extracellular" evidence="18">
    <location>
        <begin position="1"/>
        <end position="24"/>
    </location>
</feature>
<feature type="transmembrane region" description="Helical; Name=1" evidence="1">
    <location>
        <begin position="25"/>
        <end position="45"/>
    </location>
</feature>
<feature type="topological domain" description="Cytoplasmic" evidence="18">
    <location>
        <begin position="46"/>
        <end position="57"/>
    </location>
</feature>
<feature type="transmembrane region" description="Helical; Name=2" evidence="1">
    <location>
        <begin position="58"/>
        <end position="78"/>
    </location>
</feature>
<feature type="topological domain" description="Extracellular" evidence="18">
    <location>
        <begin position="79"/>
        <end position="97"/>
    </location>
</feature>
<feature type="transmembrane region" description="Helical; Name=3" evidence="1">
    <location>
        <begin position="98"/>
        <end position="118"/>
    </location>
</feature>
<feature type="topological domain" description="Cytoplasmic" evidence="18">
    <location>
        <begin position="119"/>
        <end position="143"/>
    </location>
</feature>
<feature type="transmembrane region" description="Helical; Name=4" evidence="1">
    <location>
        <begin position="144"/>
        <end position="164"/>
    </location>
</feature>
<feature type="topological domain" description="Extracellular" evidence="18">
    <location>
        <begin position="165"/>
        <end position="204"/>
    </location>
</feature>
<feature type="transmembrane region" description="Helical; Name=5" evidence="1">
    <location>
        <begin position="205"/>
        <end position="225"/>
    </location>
</feature>
<feature type="topological domain" description="Cytoplasmic" evidence="18">
    <location>
        <begin position="226"/>
        <end position="236"/>
    </location>
</feature>
<feature type="transmembrane region" description="Helical; Name=6" evidence="1">
    <location>
        <begin position="237"/>
        <end position="257"/>
    </location>
</feature>
<feature type="topological domain" description="Extracellular" evidence="18">
    <location>
        <begin position="258"/>
        <end position="268"/>
    </location>
</feature>
<feature type="transmembrane region" description="Helical; Name=7" evidence="1">
    <location>
        <begin position="269"/>
        <end position="289"/>
    </location>
</feature>
<feature type="topological domain" description="Cytoplasmic" evidence="18">
    <location>
        <begin position="290"/>
        <end position="308"/>
    </location>
</feature>
<feature type="binding site" evidence="19 20">
    <location>
        <position position="105"/>
    </location>
    <ligand>
        <name>Cu cation</name>
        <dbReference type="ChEBI" id="CHEBI:23378"/>
    </ligand>
</feature>
<feature type="binding site" evidence="20">
    <location>
        <position position="109"/>
    </location>
    <ligand>
        <name>Cu cation</name>
        <dbReference type="ChEBI" id="CHEBI:23378"/>
    </ligand>
</feature>
<feature type="binding site" evidence="22">
    <location>
        <position position="260"/>
    </location>
    <ligand>
        <name>Cu cation</name>
        <dbReference type="ChEBI" id="CHEBI:23378"/>
    </ligand>
</feature>
<feature type="glycosylation site" description="N-linked (GlcNAc...) asparagine" evidence="1">
    <location>
        <position position="5"/>
    </location>
</feature>
<feature type="disulfide bond" evidence="2">
    <location>
        <begin position="97"/>
        <end position="179"/>
    </location>
</feature>
<feature type="mutagenesis site" description="Decreased receptor activity in response to MTMT binding, even in the presence of copper." evidence="7">
    <original>H</original>
    <variation>K</variation>
    <location>
        <position position="56"/>
    </location>
</feature>
<feature type="mutagenesis site" description="Decreased receptor activity in response to MTMT binding, even in the presence of copper." evidence="7">
    <original>M</original>
    <variation>A</variation>
    <location>
        <position position="59"/>
    </location>
</feature>
<feature type="mutagenesis site" description="No receptor activity in response to MTMT binding, even in the presence of copper." evidence="7">
    <original>H</original>
    <variation>A</variation>
    <variation>K</variation>
    <variation>R</variation>
    <location>
        <position position="73"/>
    </location>
</feature>
<feature type="mutagenesis site" description="No change in receptor activity in response to MTMT binding. No change in the copper-induced enhancement of receptor activity." evidence="7">
    <original>H</original>
    <variation>F</variation>
    <variation>Y</variation>
    <location>
        <position position="73"/>
    </location>
</feature>
<feature type="mutagenesis site" description="No receptor activity in response to MTMT binding, even in the presence of copper." evidence="7">
    <original>C</original>
    <variation>A</variation>
    <variation>V</variation>
    <location>
        <position position="97"/>
    </location>
</feature>
<feature type="mutagenesis site" description="No receptor activity in response to MTMT binding, even in the presence of copper. Little to no expression detected on plasma membrane." evidence="7">
    <original>C</original>
    <variation>S</variation>
    <location>
        <position position="97"/>
    </location>
</feature>
<feature type="mutagenesis site" description="No receptor activity in response to MTMT binding, even in the presence of copper." evidence="7">
    <original>H</original>
    <variation>A</variation>
    <variation>L</variation>
    <variation>R</variation>
    <location>
        <position position="105"/>
    </location>
</feature>
<feature type="mutagenesis site" description="Decreased receptor activity in response to MTMT binding, even in the presence of copper. Complete loss of receptor activity in the absence of copper." evidence="7">
    <original>H</original>
    <variation>K</variation>
    <location>
        <position position="105"/>
    </location>
</feature>
<feature type="mutagenesis site" description="Decreased receptor activity in response to MTMT binding, even in the presence of copper. Shows low constitutive activity in the presence of copper. MTMT binding in the absence of copper results in an inverse agonist effect." evidence="8">
    <original>C</original>
    <variation>M</variation>
    <location>
        <position position="109"/>
    </location>
</feature>
<feature type="mutagenesis site" description="Decreased receptor activity in response to MTMT binding, even in the presence of copper. Complete loss of receptor activity in the absence of copper." evidence="7 8">
    <original>C</original>
    <variation>V</variation>
    <location>
        <position position="109"/>
    </location>
</feature>
<feature type="mutagenesis site" description="Decreased receptor activity in response to MTMT binding, even in the presence of copper. Complete loss of receptor activity in the absence of copper." evidence="7">
    <original>M</original>
    <variation>A</variation>
    <location>
        <position position="118"/>
    </location>
</feature>
<feature type="mutagenesis site" description="Decreased receptor activity in response to MTMT binding, even in the presence of copper." evidence="7">
    <original>C</original>
    <variation>V</variation>
    <location>
        <position position="127"/>
    </location>
</feature>
<feature type="mutagenesis site" description="Decreased receptor activity in response to MTMT binding, even in the presence of copper. Complete loss of receptor activity in the absence of copper." evidence="7">
    <original>M</original>
    <variation>A</variation>
    <location>
        <position position="136"/>
    </location>
</feature>
<feature type="mutagenesis site" description="Decreased receptor activity in response to MTMT binding, even in the presence of copper. Complete loss of receptor activity in the absence of copper." evidence="7">
    <original>C</original>
    <variation>V</variation>
    <location>
        <position position="141"/>
    </location>
</feature>
<feature type="mutagenesis site" description="No receptor activity in response to MTMT binding, even in the presence of copper." evidence="7">
    <original>H</original>
    <variation>A</variation>
    <variation>K</variation>
    <variation>N</variation>
    <variation>V</variation>
    <location>
        <position position="155"/>
    </location>
</feature>
<feature type="mutagenesis site" description="No receptor activity in response to MTMT binding, even in the presence of copper. Little to no expression detected on plasma membrane." evidence="7">
    <original>H</original>
    <variation>R</variation>
    <location>
        <position position="155"/>
    </location>
</feature>
<feature type="mutagenesis site" description="No receptor activity in response to MTMT binding, even in the presence of copper." evidence="7">
    <original>C</original>
    <variation>A</variation>
    <variation>F</variation>
    <variation>V</variation>
    <location>
        <position position="169"/>
    </location>
</feature>
<feature type="mutagenesis site" description="No receptor activity in response to MTMT binding, even in the presence of copper. Little to no expression detected on plasma membrane." evidence="7">
    <original>C</original>
    <variation>S</variation>
    <location>
        <position position="169"/>
    </location>
</feature>
<feature type="mutagenesis site" description="No receptor activity in response to MTMT binding, even in the presence of copper." evidence="7">
    <original>C</original>
    <variation>A</variation>
    <variation>V</variation>
    <location>
        <position position="179"/>
    </location>
</feature>
<feature type="mutagenesis site" description="No receptor activity in response to MTMT binding, even in the presence of copper. Little to no expression detected on plasma membrane." evidence="7">
    <original>C</original>
    <variation>S</variation>
    <location>
        <position position="179"/>
    </location>
</feature>
<feature type="mutagenesis site" description="No receptor activity in response to MTMT binding, even in the presence of copper." evidence="7">
    <original>C</original>
    <variation>A</variation>
    <variation>V</variation>
    <location>
        <position position="189"/>
    </location>
</feature>
<feature type="mutagenesis site" description="Decreased receptor activity in response to MTMT binding, even in the presence of copper. Complete loss of receptor activity in the absence of copper." evidence="7">
    <original>C</original>
    <variation>S</variation>
    <location>
        <position position="189"/>
    </location>
</feature>
<feature type="mutagenesis site" description="No change in receptor activity in response to MTMT binding in the presence of copper. Decreased receptor activity in the absence of copper." evidence="7">
    <original>C</original>
    <variation>A</variation>
    <location>
        <position position="210"/>
    </location>
</feature>
<feature type="mutagenesis site" description="No change in receptor activity in response to MTMT binding in the presence of copper. Complete loss of receptor activity in the absence of copper." evidence="7">
    <original>C</original>
    <variation>S</variation>
    <location>
        <position position="210"/>
    </location>
</feature>
<feature type="mutagenesis site" description="No receptor activity in response to MTMT binding, even in the presence of copper." evidence="7">
    <original>C</original>
    <variation>V</variation>
    <location>
        <position position="210"/>
    </location>
</feature>
<feature type="mutagenesis site" description="No receptor activity in response to MTMT binding, even in the presence of copper." evidence="7">
    <original>H</original>
    <variation>A</variation>
    <variation>K</variation>
    <location>
        <position position="243"/>
    </location>
</feature>
<feature type="mutagenesis site" description="No receptor activity in response to MTMT binding, even in the presence of copper. Little to no expression detected on plasma membrane." evidence="7">
    <original>H</original>
    <variation>R</variation>
    <location>
        <position position="243"/>
    </location>
</feature>
<feature type="mutagenesis site" description="Decreased receptor activity in response to MTMT binding, even in the presence of copper. Complete loss of receptor activity in the absence of copper." evidence="7 11">
    <original>C</original>
    <variation>V</variation>
    <variation>S</variation>
    <location>
        <position position="254"/>
    </location>
</feature>
<feature type="mutagenesis site" description="Decreased receptor activity in response to MTMT binding, even in the presence of copper." evidence="11">
    <original>R</original>
    <variation>H</variation>
    <location>
        <position position="260"/>
    </location>
</feature>
<feature type="mutagenesis site" description="No receptor activity in response to MTMT binding, even in the presence of copper." evidence="11">
    <original>R</original>
    <variation>W</variation>
    <variation>A</variation>
    <location>
        <position position="260"/>
    </location>
</feature>
<feature type="mutagenesis site" description="Decreased receptor activity in response to MTMT binding, even in the presence of copper." evidence="11">
    <original>K</original>
    <variation>A</variation>
    <location>
        <position position="269"/>
    </location>
</feature>
<feature type="mutagenesis site" description="No receptor activity in response to MTMT binding, even in the presence of copper." evidence="11">
    <original>K</original>
    <variation>H</variation>
    <location>
        <position position="269"/>
    </location>
</feature>
<feature type="mutagenesis site" description="Decreased receptor activity in response to MTMT binding, even in the presence of copper. Complete loss of receptor activity in the absence of copper." evidence="7">
    <original>M</original>
    <variation>A</variation>
    <location>
        <position position="298"/>
    </location>
</feature>
<feature type="mutagenesis site" description="Decreased receptor activity in response to MTMT binding, even in the presence of copper." evidence="7">
    <original>H</original>
    <variation>K</variation>
    <location>
        <position position="300"/>
    </location>
</feature>
<feature type="mutagenesis site" description="Decreased receptor activity in response to MTMT binding, even in the presence of copper." evidence="7">
    <original>C</original>
    <variation>V</variation>
    <location>
        <position position="307"/>
    </location>
</feature>
<feature type="sequence conflict" description="In Ref. 1; BAA86125 and 2; AAL60958." evidence="18" ref="1 2">
    <original>Q</original>
    <variation>K</variation>
    <location>
        <position position="228"/>
    </location>
</feature>
<feature type="sequence conflict" description="In Ref. 1; BAA86125 and 2; AAL60958." evidence="18" ref="1 2">
    <original>A</original>
    <variation>T</variation>
    <location>
        <position position="248"/>
    </location>
</feature>
<accession>Q7TQQ0</accession>
<accession>A0A0U1RP41</accession>
<accession>Q9R0K3</accession>
<sequence>MGALNQTRVTEFIFLGLTDNWVLEILFFVPFTVTYMLTLLGNFLIVVTIVFTPRLHNPMYFFLSNLSFIDICHSSVTVPKMLEGLLLERKTISFDNCIAQLFFLHLFACSEIFLLTIMAYDRYVAICIPLHYSNVMNMKVCVQLVFALWLGGTIHSLVQTFLTIRLPYCGPNIIDSYFCDVPPVIKLACTDTYLTGILIVSNSGTISLVCFLALVTSYTVILFSLRKQSAEGRRKALSTCSAHFMVVALFFGPCIFLYTRPDSSFSIDKVVSVFYTVVTPLLNPLIYTLRNEEVKTAMKHLRQRRICS</sequence>
<proteinExistence type="evidence at protein level"/>
<reference evidence="26" key="1">
    <citation type="journal article" date="1999" name="J. Neurosci.">
        <title>Olfactory neurons expressing closely linked and homologous odorant receptor genes tend to project their axons to neighboring glomeruli on the olfactory bulb.</title>
        <authorList>
            <person name="Tsuboi A."/>
            <person name="Yoshihara S."/>
            <person name="Yamazaki N."/>
            <person name="Kasai H."/>
            <person name="Asai-Tsuboi H."/>
            <person name="Komatsu M."/>
            <person name="Serizawa S."/>
            <person name="Ishii T."/>
            <person name="Matsuda Y."/>
            <person name="Nagawa F."/>
            <person name="Sakano H."/>
        </authorList>
    </citation>
    <scope>NUCLEOTIDE SEQUENCE [GENOMIC DNA]</scope>
    <scope>TISSUE SPECIFICITY</scope>
    <source>
        <strain evidence="26">129/SvJ</strain>
    </source>
</reference>
<reference evidence="24" key="2">
    <citation type="journal article" date="2002" name="Hum. Mol. Genet.">
        <title>Different evolutionary processes shaped the mouse and human olfactory receptor gene families.</title>
        <authorList>
            <person name="Young J.M."/>
            <person name="Friedman C."/>
            <person name="Williams E.M."/>
            <person name="Ross J.A."/>
            <person name="Tonnes-Priddy L."/>
            <person name="Trask B.J."/>
        </authorList>
    </citation>
    <scope>NUCLEOTIDE SEQUENCE [GENOMIC DNA]</scope>
</reference>
<reference key="3">
    <citation type="journal article" date="2002" name="Hum. Mol. Genet.">
        <authorList>
            <person name="Young J.M."/>
            <person name="Friedman C."/>
            <person name="Williams E.M."/>
            <person name="Ross J.A."/>
            <person name="Tonnes-Priddy L."/>
            <person name="Trask B.J."/>
        </authorList>
    </citation>
    <scope>ERRATUM OF PUBMED:11875048</scope>
</reference>
<reference evidence="25" key="4">
    <citation type="journal article" date="2003" name="Genome Biol.">
        <title>Odorant receptor expressed sequence tags demonstrate olfactory expression of over 400 genes, extensive alternate splicing and unequal expression levels.</title>
        <authorList>
            <person name="Young J.M."/>
            <person name="Shykind B.M."/>
            <person name="Lane R.P."/>
            <person name="Tonnes-Priddy L."/>
            <person name="Ross J.A."/>
            <person name="Walker M."/>
            <person name="Williams E.M."/>
            <person name="Trask B.J."/>
        </authorList>
    </citation>
    <scope>NUCLEOTIDE SEQUENCE [GENOMIC DNA]</scope>
</reference>
<reference evidence="29" key="5">
    <citation type="journal article" date="2009" name="PLoS Biol.">
        <title>Lineage-specific biology revealed by a finished genome assembly of the mouse.</title>
        <authorList>
            <person name="Church D.M."/>
            <person name="Goodstadt L."/>
            <person name="Hillier L.W."/>
            <person name="Zody M.C."/>
            <person name="Goldstein S."/>
            <person name="She X."/>
            <person name="Bult C.J."/>
            <person name="Agarwala R."/>
            <person name="Cherry J.L."/>
            <person name="DiCuccio M."/>
            <person name="Hlavina W."/>
            <person name="Kapustin Y."/>
            <person name="Meric P."/>
            <person name="Maglott D."/>
            <person name="Birtle Z."/>
            <person name="Marques A.C."/>
            <person name="Graves T."/>
            <person name="Zhou S."/>
            <person name="Teague B."/>
            <person name="Potamousis K."/>
            <person name="Churas C."/>
            <person name="Place M."/>
            <person name="Herschleb J."/>
            <person name="Runnheim R."/>
            <person name="Forrest D."/>
            <person name="Amos-Landgraf J."/>
            <person name="Schwartz D.C."/>
            <person name="Cheng Z."/>
            <person name="Lindblad-Toh K."/>
            <person name="Eichler E.E."/>
            <person name="Ponting C.P."/>
        </authorList>
    </citation>
    <scope>NUCLEOTIDE SEQUENCE [LARGE SCALE GENOMIC DNA]</scope>
    <source>
        <strain evidence="29">C57BL/6J</strain>
    </source>
</reference>
<reference evidence="27" key="6">
    <citation type="submission" date="2007-06" db="EMBL/GenBank/DDBJ databases">
        <authorList>
            <person name="Mural R.J."/>
            <person name="Adams M.D."/>
            <person name="Myers E.W."/>
            <person name="Smith H.O."/>
            <person name="Venter J.C."/>
        </authorList>
    </citation>
    <scope>NUCLEOTIDE SEQUENCE [LARGE SCALE GENOMIC DNA]</scope>
</reference>
<reference evidence="23" key="7">
    <citation type="journal article" date="2004" name="Genome Res.">
        <title>The status, quality, and expansion of the NIH full-length cDNA project: the Mammalian Gene Collection (MGC).</title>
        <authorList>
            <consortium name="The MGC Project Team"/>
        </authorList>
    </citation>
    <scope>NUCLEOTIDE SEQUENCE [LARGE SCALE MRNA]</scope>
</reference>
<reference evidence="18" key="8">
    <citation type="journal article" date="2012" name="Proc. Natl. Acad. Sci. U.S.A.">
        <title>Crucial role of copper in detection of metal-coordinating odorants.</title>
        <authorList>
            <person name="Duan X."/>
            <person name="Block E."/>
            <person name="Li Z."/>
            <person name="Connelly T."/>
            <person name="Zhang J."/>
            <person name="Huang Z."/>
            <person name="Su X."/>
            <person name="Pan Y."/>
            <person name="Wu L."/>
            <person name="Chi Q."/>
            <person name="Thomas S."/>
            <person name="Zhang S."/>
            <person name="Ma M."/>
            <person name="Matsunami H."/>
            <person name="Chen G.Q."/>
            <person name="Zhuang H."/>
        </authorList>
    </citation>
    <scope>FUNCTION</scope>
    <scope>ACTIVITY REGULATION</scope>
    <scope>SUBCELLULAR LOCATION</scope>
    <scope>TISSUE SPECIFICITY</scope>
    <scope>MUTAGENESIS OF HIS-56; MET-59; HIS-73; CYS-97; HIS-105; CYS-109; MET-118; CYS-127; MET-136; CYS-141; HIS-155; CYS-169; CYS-179; CYS-189; CYS-210; HIS-243; CYS-254; MET-298; HIS-300 AND CYS-307</scope>
</reference>
<reference evidence="18" key="9">
    <citation type="journal article" date="2008" name="Dev. Neurobiol.">
        <title>Differential development of odorant receptor expression patterns in the olfactory epithelium: a quantitative analysis in the mouse septal organ.</title>
        <authorList>
            <person name="Tian H."/>
            <person name="Ma M."/>
        </authorList>
    </citation>
    <scope>TISSUE SPECIFICITY</scope>
    <scope>DEVELOPMENTAL STAGE</scope>
</reference>
<reference evidence="18" key="10">
    <citation type="journal article" date="2014" name="Biophys. J.">
        <title>QM/MM model of the mouse olfactory receptor MOR244-3 validated by site-directed mutagenesis experiments.</title>
        <authorList>
            <person name="Sekharan S."/>
            <person name="Ertem M.Z."/>
            <person name="Zhuang H."/>
            <person name="Block E."/>
            <person name="Matsunami H."/>
            <person name="Zhang R."/>
            <person name="Wei J.N."/>
            <person name="Pan Y."/>
            <person name="Batista V.S."/>
        </authorList>
    </citation>
    <scope>FUNCTION</scope>
    <scope>ACTIVITY REGULATION</scope>
    <scope>SUBCELLULAR LOCATION</scope>
    <scope>MUTAGENESIS OF CYS-109</scope>
</reference>
<reference evidence="18" key="11">
    <citation type="journal article" date="2015" name="Proc. Natl. Acad. Sci. U.S.A.">
        <title>Implausibility of the vibrational theory of olfaction.</title>
        <authorList>
            <person name="Block E."/>
            <person name="Jang S."/>
            <person name="Matsunami H."/>
            <person name="Sekharan S."/>
            <person name="Dethier B."/>
            <person name="Ertem M.Z."/>
            <person name="Gundala S."/>
            <person name="Pan Y."/>
            <person name="Li S."/>
            <person name="Li Z."/>
            <person name="Lodge S.N."/>
            <person name="Ozbil M."/>
            <person name="Jiang H."/>
            <person name="Penalba S.F."/>
            <person name="Batista V.S."/>
            <person name="Zhuang H."/>
        </authorList>
    </citation>
    <scope>FUNCTION</scope>
    <scope>SUBCELLULAR LOCATION</scope>
</reference>
<reference evidence="18" key="12">
    <citation type="journal article" date="2016" name="Anal. Biochem.">
        <title>Direct nuclear magnetic resonance observation of odorant binding to mouse odorant receptor MOR244-3.</title>
        <authorList>
            <person name="Burger J.L."/>
            <person name="Jeerage K.M."/>
            <person name="Bruno T.J."/>
        </authorList>
    </citation>
    <scope>FUNCTION</scope>
    <scope>SUBCELLULAR LOCATION</scope>
</reference>
<reference evidence="18" key="13">
    <citation type="journal article" date="2018" name="Chem. Senses">
        <title>A Multispecific Investigation of the Metal Effect in Mammalian Odorant Receptors for Sulfur-containing Compounds.</title>
        <authorList>
            <person name="Zhang R."/>
            <person name="Pan Y."/>
            <person name="Ahmed L."/>
            <person name="Block E."/>
            <person name="Zhang Y."/>
            <person name="Batista V.S."/>
            <person name="Zhuang H."/>
        </authorList>
    </citation>
    <scope>FUNCTION</scope>
    <scope>ACTIVITY REGULATION</scope>
    <scope>SUBCELLULAR LOCATION</scope>
    <scope>MUTAGENESIS OF CYS-254; ARG-260 AND LYS-269</scope>
</reference>
<organism evidence="25">
    <name type="scientific">Mus musculus</name>
    <name type="common">Mouse</name>
    <dbReference type="NCBI Taxonomy" id="10090"/>
    <lineage>
        <taxon>Eukaryota</taxon>
        <taxon>Metazoa</taxon>
        <taxon>Chordata</taxon>
        <taxon>Craniata</taxon>
        <taxon>Vertebrata</taxon>
        <taxon>Euteleostomi</taxon>
        <taxon>Mammalia</taxon>
        <taxon>Eutheria</taxon>
        <taxon>Euarchontoglires</taxon>
        <taxon>Glires</taxon>
        <taxon>Rodentia</taxon>
        <taxon>Myomorpha</taxon>
        <taxon>Muroidea</taxon>
        <taxon>Muridae</taxon>
        <taxon>Murinae</taxon>
        <taxon>Mus</taxon>
        <taxon>Mus</taxon>
    </lineage>
</organism>
<keyword id="KW-1003">Cell membrane</keyword>
<keyword id="KW-0186">Copper</keyword>
<keyword id="KW-1015">Disulfide bond</keyword>
<keyword id="KW-0297">G-protein coupled receptor</keyword>
<keyword id="KW-0325">Glycoprotein</keyword>
<keyword id="KW-0472">Membrane</keyword>
<keyword id="KW-0479">Metal-binding</keyword>
<keyword id="KW-0552">Olfaction</keyword>
<keyword id="KW-0675">Receptor</keyword>
<keyword id="KW-1185">Reference proteome</keyword>
<keyword id="KW-0716">Sensory transduction</keyword>
<keyword id="KW-0807">Transducer</keyword>
<keyword id="KW-0812">Transmembrane</keyword>
<keyword id="KW-1133">Transmembrane helix</keyword>
<comment type="function">
    <text evidence="7 8 9 10 11 18">Olfactory receptor that is activated by the binding of organosulfur odorants with thioether groups such as (methylthio)methanethiol (MTMT) and bis(methylthiomethyl) disulfide (PubMed:22328155, PubMed:25185561, PubMed:25901328, PubMed:29659735). Also binds odorants cis-cyclooctene and tert-butyl mercaptan (PubMed:27019154). The activity of this receptor is mediated by G proteins which activate adenylyl cyclase (Potential).</text>
</comment>
<comment type="activity regulation">
    <text evidence="7 8 11">Copper binding enhances receptor activity in response to odorant binding.</text>
</comment>
<comment type="subcellular location">
    <subcellularLocation>
        <location evidence="1 4 7 10 11 20 21">Cell membrane</location>
        <topology evidence="1 4 10">Multi-pass membrane protein</topology>
    </subcellularLocation>
</comment>
<comment type="tissue specificity">
    <text evidence="5 6 7">Expressed in olfactory epithelium, specifically in the olfactory sensory neurons of the septal organ.</text>
</comment>
<comment type="developmental stage">
    <text evidence="6">Detected at very low levels at 18 dpc and increased to its maximum level of expression by 7 days after birth in olfactory sensory neurons of the septal organ.</text>
</comment>
<comment type="similarity">
    <text evidence="1 3">Belongs to the G-protein coupled receptor 1 family.</text>
</comment>
<evidence type="ECO:0000255" key="1"/>
<evidence type="ECO:0000255" key="2">
    <source>
        <dbReference type="PROSITE-ProRule" id="PRU00521"/>
    </source>
</evidence>
<evidence type="ECO:0000255" key="3">
    <source>
        <dbReference type="RuleBase" id="RU000688"/>
    </source>
</evidence>
<evidence type="ECO:0000255" key="4">
    <source>
        <dbReference type="RuleBase" id="RU363047"/>
    </source>
</evidence>
<evidence type="ECO:0000269" key="5">
    <source>
    </source>
</evidence>
<evidence type="ECO:0000269" key="6">
    <source>
    </source>
</evidence>
<evidence type="ECO:0000269" key="7">
    <source>
    </source>
</evidence>
<evidence type="ECO:0000269" key="8">
    <source>
    </source>
</evidence>
<evidence type="ECO:0000269" key="9">
    <source>
    </source>
</evidence>
<evidence type="ECO:0000269" key="10">
    <source>
    </source>
</evidence>
<evidence type="ECO:0000269" key="11">
    <source>
    </source>
</evidence>
<evidence type="ECO:0000303" key="12">
    <source>
    </source>
</evidence>
<evidence type="ECO:0000303" key="13">
    <source>
    </source>
</evidence>
<evidence type="ECO:0000303" key="14">
    <source>
    </source>
</evidence>
<evidence type="ECO:0000303" key="15">
    <source>
    </source>
</evidence>
<evidence type="ECO:0000303" key="16">
    <source>
    </source>
</evidence>
<evidence type="ECO:0000303" key="17">
    <source>
    </source>
</evidence>
<evidence type="ECO:0000305" key="18"/>
<evidence type="ECO:0000305" key="19">
    <source>
    </source>
</evidence>
<evidence type="ECO:0000305" key="20">
    <source>
    </source>
</evidence>
<evidence type="ECO:0000305" key="21">
    <source>
    </source>
</evidence>
<evidence type="ECO:0000305" key="22">
    <source>
    </source>
</evidence>
<evidence type="ECO:0000312" key="23">
    <source>
        <dbReference type="EMBL" id="AAI19196.1"/>
    </source>
</evidence>
<evidence type="ECO:0000312" key="24">
    <source>
        <dbReference type="EMBL" id="AAL60958.1"/>
    </source>
</evidence>
<evidence type="ECO:0000312" key="25">
    <source>
        <dbReference type="EMBL" id="AAP71857.1"/>
    </source>
</evidence>
<evidence type="ECO:0000312" key="26">
    <source>
        <dbReference type="EMBL" id="BAA86125.1"/>
    </source>
</evidence>
<evidence type="ECO:0000312" key="27">
    <source>
        <dbReference type="EMBL" id="EDL42235.1"/>
    </source>
</evidence>
<evidence type="ECO:0000312" key="28">
    <source>
        <dbReference type="MGI" id="MGI:3031343"/>
    </source>
</evidence>
<evidence type="ECO:0000312" key="29">
    <source>
        <dbReference type="Proteomes" id="UP000000589"/>
    </source>
</evidence>
<dbReference type="EMBL" id="AB030894">
    <property type="protein sequence ID" value="BAA86125.1"/>
    <property type="molecule type" value="Genomic_DNA"/>
</dbReference>
<dbReference type="EMBL" id="AY073295">
    <property type="protein sequence ID" value="AAL60958.1"/>
    <property type="molecule type" value="Genomic_DNA"/>
</dbReference>
<dbReference type="EMBL" id="AY318728">
    <property type="protein sequence ID" value="AAP71857.1"/>
    <property type="molecule type" value="Genomic_DNA"/>
</dbReference>
<dbReference type="EMBL" id="AC126025">
    <property type="status" value="NOT_ANNOTATED_CDS"/>
    <property type="molecule type" value="Genomic_DNA"/>
</dbReference>
<dbReference type="EMBL" id="CH466659">
    <property type="protein sequence ID" value="EDL42235.1"/>
    <property type="molecule type" value="Genomic_DNA"/>
</dbReference>
<dbReference type="EMBL" id="BC119195">
    <property type="protein sequence ID" value="AAI19196.1"/>
    <property type="molecule type" value="mRNA"/>
</dbReference>
<dbReference type="EMBL" id="BC119199">
    <property type="protein sequence ID" value="AAI19200.1"/>
    <property type="molecule type" value="mRNA"/>
</dbReference>
<dbReference type="CCDS" id="CCDS27060.1"/>
<dbReference type="RefSeq" id="NP_065260.2">
    <property type="nucleotide sequence ID" value="NM_020514.2"/>
</dbReference>
<dbReference type="SMR" id="Q7TQQ0"/>
<dbReference type="FunCoup" id="Q7TQQ0">
    <property type="interactions" value="1620"/>
</dbReference>
<dbReference type="STRING" id="10090.ENSMUSP00000150016"/>
<dbReference type="GlyCosmos" id="Q7TQQ0">
    <property type="glycosylation" value="1 site, No reported glycans"/>
</dbReference>
<dbReference type="GlyGen" id="Q7TQQ0">
    <property type="glycosylation" value="1 site"/>
</dbReference>
<dbReference type="iPTMnet" id="Q7TQQ0"/>
<dbReference type="PhosphoSitePlus" id="Q7TQQ0"/>
<dbReference type="PaxDb" id="10090-ENSMUSP00000046688"/>
<dbReference type="Antibodypedia" id="58801">
    <property type="antibodies" value="39 antibodies from 14 providers"/>
</dbReference>
<dbReference type="DNASU" id="57271"/>
<dbReference type="Ensembl" id="ENSMUST00000045066.3">
    <property type="protein sequence ID" value="ENSMUSP00000046688.3"/>
    <property type="gene ID" value="ENSMUSG00000035626.5"/>
</dbReference>
<dbReference type="Ensembl" id="ENSMUST00000205900.3">
    <property type="protein sequence ID" value="ENSMUSP00000145819.3"/>
    <property type="gene ID" value="ENSMUSG00000035626.5"/>
</dbReference>
<dbReference type="Ensembl" id="ENSMUST00000206100.2">
    <property type="protein sequence ID" value="ENSMUSP00000146173.2"/>
    <property type="gene ID" value="ENSMUSG00000035626.5"/>
</dbReference>
<dbReference type="Ensembl" id="ENSMUST00000215030.2">
    <property type="protein sequence ID" value="ENSMUSP00000150016.2"/>
    <property type="gene ID" value="ENSMUSG00000035626.5"/>
</dbReference>
<dbReference type="GeneID" id="57271"/>
<dbReference type="KEGG" id="mmu:57271"/>
<dbReference type="UCSC" id="uc007tpl.2">
    <property type="organism name" value="mouse"/>
</dbReference>
<dbReference type="AGR" id="MGI:3031343"/>
<dbReference type="CTD" id="26686"/>
<dbReference type="MGI" id="MGI:3031343">
    <property type="gene designation" value="Or4e2"/>
</dbReference>
<dbReference type="VEuPathDB" id="HostDB:ENSMUSG00000035626"/>
<dbReference type="eggNOG" id="ENOG502RCGN">
    <property type="taxonomic scope" value="Eukaryota"/>
</dbReference>
<dbReference type="GeneTree" id="ENSGT00940000163275"/>
<dbReference type="HOGENOM" id="CLU_012526_8_1_1"/>
<dbReference type="InParanoid" id="Q7TQQ0"/>
<dbReference type="OMA" id="CACAEIF"/>
<dbReference type="OrthoDB" id="10017003at2759"/>
<dbReference type="PhylomeDB" id="Q7TQQ0"/>
<dbReference type="TreeFam" id="TF337251"/>
<dbReference type="BioGRID-ORCS" id="57271">
    <property type="hits" value="1 hit in 70 CRISPR screens"/>
</dbReference>
<dbReference type="ChiTaRS" id="Olfr1509">
    <property type="organism name" value="mouse"/>
</dbReference>
<dbReference type="PRO" id="PR:Q7TQQ0"/>
<dbReference type="Proteomes" id="UP000000589">
    <property type="component" value="Chromosome 14"/>
</dbReference>
<dbReference type="RNAct" id="Q7TQQ0">
    <property type="molecule type" value="protein"/>
</dbReference>
<dbReference type="Bgee" id="ENSMUSG00000035626">
    <property type="expression patterns" value="Expressed in vomeronasal organ and 10 other cell types or tissues"/>
</dbReference>
<dbReference type="ExpressionAtlas" id="Q7TQQ0">
    <property type="expression patterns" value="baseline and differential"/>
</dbReference>
<dbReference type="GO" id="GO:0016020">
    <property type="term" value="C:membrane"/>
    <property type="evidence" value="ECO:0000315"/>
    <property type="project" value="UniProtKB"/>
</dbReference>
<dbReference type="GO" id="GO:0005886">
    <property type="term" value="C:plasma membrane"/>
    <property type="evidence" value="ECO:0000314"/>
    <property type="project" value="UniProtKB"/>
</dbReference>
<dbReference type="GO" id="GO:0005507">
    <property type="term" value="F:copper ion binding"/>
    <property type="evidence" value="ECO:0000315"/>
    <property type="project" value="UniProtKB"/>
</dbReference>
<dbReference type="GO" id="GO:0004930">
    <property type="term" value="F:G protein-coupled receptor activity"/>
    <property type="evidence" value="ECO:0007669"/>
    <property type="project" value="UniProtKB-KW"/>
</dbReference>
<dbReference type="GO" id="GO:0005549">
    <property type="term" value="F:odorant binding"/>
    <property type="evidence" value="ECO:0000314"/>
    <property type="project" value="UniProtKB"/>
</dbReference>
<dbReference type="GO" id="GO:0004984">
    <property type="term" value="F:olfactory receptor activity"/>
    <property type="evidence" value="ECO:0000314"/>
    <property type="project" value="UniProtKB"/>
</dbReference>
<dbReference type="GO" id="GO:0050907">
    <property type="term" value="P:detection of chemical stimulus involved in sensory perception"/>
    <property type="evidence" value="ECO:0000314"/>
    <property type="project" value="UniProtKB"/>
</dbReference>
<dbReference type="GO" id="GO:0050911">
    <property type="term" value="P:detection of chemical stimulus involved in sensory perception of smell"/>
    <property type="evidence" value="ECO:0000314"/>
    <property type="project" value="UniProtKB"/>
</dbReference>
<dbReference type="GO" id="GO:0007186">
    <property type="term" value="P:G protein-coupled receptor signaling pathway"/>
    <property type="evidence" value="ECO:0000247"/>
    <property type="project" value="MGI"/>
</dbReference>
<dbReference type="GO" id="GO:0007608">
    <property type="term" value="P:sensory perception of smell"/>
    <property type="evidence" value="ECO:0000247"/>
    <property type="project" value="MGI"/>
</dbReference>
<dbReference type="CDD" id="cd15940">
    <property type="entry name" value="7tmA_OR4E-like"/>
    <property type="match status" value="1"/>
</dbReference>
<dbReference type="FunFam" id="1.10.1220.70:FF:000001">
    <property type="entry name" value="Olfactory receptor"/>
    <property type="match status" value="1"/>
</dbReference>
<dbReference type="FunFam" id="1.20.1070.10:FF:000007">
    <property type="entry name" value="Olfactory receptor"/>
    <property type="match status" value="1"/>
</dbReference>
<dbReference type="Gene3D" id="1.20.1070.10">
    <property type="entry name" value="Rhodopsin 7-helix transmembrane proteins"/>
    <property type="match status" value="1"/>
</dbReference>
<dbReference type="InterPro" id="IPR000276">
    <property type="entry name" value="GPCR_Rhodpsn"/>
</dbReference>
<dbReference type="InterPro" id="IPR017452">
    <property type="entry name" value="GPCR_Rhodpsn_7TM"/>
</dbReference>
<dbReference type="InterPro" id="IPR000725">
    <property type="entry name" value="Olfact_rcpt"/>
</dbReference>
<dbReference type="InterPro" id="IPR050427">
    <property type="entry name" value="Olfactory_Receptors"/>
</dbReference>
<dbReference type="PANTHER" id="PTHR48002">
    <property type="entry name" value="OLFACTORY RECEPTOR"/>
    <property type="match status" value="1"/>
</dbReference>
<dbReference type="Pfam" id="PF13853">
    <property type="entry name" value="7tm_4"/>
    <property type="match status" value="1"/>
</dbReference>
<dbReference type="PRINTS" id="PR00237">
    <property type="entry name" value="GPCRRHODOPSN"/>
</dbReference>
<dbReference type="PRINTS" id="PR00245">
    <property type="entry name" value="OLFACTORYR"/>
</dbReference>
<dbReference type="SUPFAM" id="SSF81321">
    <property type="entry name" value="Family A G protein-coupled receptor-like"/>
    <property type="match status" value="1"/>
</dbReference>
<dbReference type="PROSITE" id="PS00237">
    <property type="entry name" value="G_PROTEIN_RECEP_F1_1"/>
    <property type="match status" value="1"/>
</dbReference>
<dbReference type="PROSITE" id="PS50262">
    <property type="entry name" value="G_PROTEIN_RECEP_F1_2"/>
    <property type="match status" value="1"/>
</dbReference>
<gene>
    <name evidence="28" type="primary">Or4e2</name>
    <name evidence="13 14 15 28" type="synonym">MOR244-3</name>
    <name evidence="12 28" type="synonym">MOR83</name>
    <name evidence="28" type="synonym">Olfr1509</name>
</gene>